<comment type="cofactor">
    <cofactor evidence="1">
        <name>Zn(2+)</name>
        <dbReference type="ChEBI" id="CHEBI:29105"/>
    </cofactor>
    <text evidence="1">Binds 1 zinc ion.</text>
</comment>
<comment type="subcellular location">
    <subcellularLocation>
        <location evidence="1">Cytoplasm</location>
    </subcellularLocation>
</comment>
<comment type="similarity">
    <text evidence="1">Belongs to the SprT family.</text>
</comment>
<accession>Q8E671</accession>
<sequence length="152" mass="18260">MDLVLSSQTDLTNYVKKVSIEDFGCQFLHTAHWNNRLRTTGGRFFPNDRHLDFNPKIYREFGIDIFRKIVRHELCHYHLYIQGKGYQHRDKAFKELLEKVDGLRYTPRVTAVKVNYHHYSCQSCGQVYRRRRRVNLRKFACGYCHGRLIESF</sequence>
<dbReference type="EMBL" id="AL766846">
    <property type="protein sequence ID" value="CAD46399.1"/>
    <property type="molecule type" value="Genomic_DNA"/>
</dbReference>
<dbReference type="RefSeq" id="WP_000366646.1">
    <property type="nucleotide sequence ID" value="NC_004368.1"/>
</dbReference>
<dbReference type="KEGG" id="san:gbs0755"/>
<dbReference type="eggNOG" id="COG3091">
    <property type="taxonomic scope" value="Bacteria"/>
</dbReference>
<dbReference type="HOGENOM" id="CLU_123820_0_0_9"/>
<dbReference type="Proteomes" id="UP000000823">
    <property type="component" value="Chromosome"/>
</dbReference>
<dbReference type="GO" id="GO:0005737">
    <property type="term" value="C:cytoplasm"/>
    <property type="evidence" value="ECO:0007669"/>
    <property type="project" value="UniProtKB-SubCell"/>
</dbReference>
<dbReference type="GO" id="GO:0008270">
    <property type="term" value="F:zinc ion binding"/>
    <property type="evidence" value="ECO:0007669"/>
    <property type="project" value="UniProtKB-UniRule"/>
</dbReference>
<dbReference type="GO" id="GO:0006950">
    <property type="term" value="P:response to stress"/>
    <property type="evidence" value="ECO:0007669"/>
    <property type="project" value="UniProtKB-ARBA"/>
</dbReference>
<dbReference type="HAMAP" id="MF_00745">
    <property type="entry name" value="SprT_like"/>
    <property type="match status" value="1"/>
</dbReference>
<dbReference type="InterPro" id="IPR006640">
    <property type="entry name" value="SprT-like_domain"/>
</dbReference>
<dbReference type="InterPro" id="IPR023524">
    <property type="entry name" value="Uncharacterised_SprT-like"/>
</dbReference>
<dbReference type="NCBIfam" id="NF003339">
    <property type="entry name" value="PRK04351.1"/>
    <property type="match status" value="1"/>
</dbReference>
<dbReference type="Pfam" id="PF10263">
    <property type="entry name" value="SprT-like"/>
    <property type="match status" value="1"/>
</dbReference>
<dbReference type="SMART" id="SM00731">
    <property type="entry name" value="SprT"/>
    <property type="match status" value="1"/>
</dbReference>
<evidence type="ECO:0000255" key="1">
    <source>
        <dbReference type="HAMAP-Rule" id="MF_00745"/>
    </source>
</evidence>
<feature type="chain" id="PRO_0000213305" description="Protein SprT-like">
    <location>
        <begin position="1"/>
        <end position="152"/>
    </location>
</feature>
<feature type="domain" description="SprT-like" evidence="1">
    <location>
        <begin position="13"/>
        <end position="148"/>
    </location>
</feature>
<feature type="active site" evidence="1">
    <location>
        <position position="73"/>
    </location>
</feature>
<feature type="binding site" evidence="1">
    <location>
        <position position="72"/>
    </location>
    <ligand>
        <name>Zn(2+)</name>
        <dbReference type="ChEBI" id="CHEBI:29105"/>
    </ligand>
</feature>
<feature type="binding site" evidence="1">
    <location>
        <position position="76"/>
    </location>
    <ligand>
        <name>Zn(2+)</name>
        <dbReference type="ChEBI" id="CHEBI:29105"/>
    </ligand>
</feature>
<name>SPRTL_STRA3</name>
<gene>
    <name type="ordered locus">gbs0755</name>
</gene>
<keyword id="KW-0963">Cytoplasm</keyword>
<keyword id="KW-0479">Metal-binding</keyword>
<keyword id="KW-0862">Zinc</keyword>
<organism>
    <name type="scientific">Streptococcus agalactiae serotype III (strain NEM316)</name>
    <dbReference type="NCBI Taxonomy" id="211110"/>
    <lineage>
        <taxon>Bacteria</taxon>
        <taxon>Bacillati</taxon>
        <taxon>Bacillota</taxon>
        <taxon>Bacilli</taxon>
        <taxon>Lactobacillales</taxon>
        <taxon>Streptococcaceae</taxon>
        <taxon>Streptococcus</taxon>
    </lineage>
</organism>
<proteinExistence type="inferred from homology"/>
<reference key="1">
    <citation type="journal article" date="2002" name="Mol. Microbiol.">
        <title>Genome sequence of Streptococcus agalactiae, a pathogen causing invasive neonatal disease.</title>
        <authorList>
            <person name="Glaser P."/>
            <person name="Rusniok C."/>
            <person name="Buchrieser C."/>
            <person name="Chevalier F."/>
            <person name="Frangeul L."/>
            <person name="Msadek T."/>
            <person name="Zouine M."/>
            <person name="Couve E."/>
            <person name="Lalioui L."/>
            <person name="Poyart C."/>
            <person name="Trieu-Cuot P."/>
            <person name="Kunst F."/>
        </authorList>
    </citation>
    <scope>NUCLEOTIDE SEQUENCE [LARGE SCALE GENOMIC DNA]</scope>
    <source>
        <strain>NEM316</strain>
    </source>
</reference>
<protein>
    <recommendedName>
        <fullName evidence="1">Protein SprT-like</fullName>
    </recommendedName>
</protein>